<sequence length="542" mass="57197">MSKEIKFSSDARTAMMRGIDILADTVKTTLGPKGRNVVLEKSYGSPLITNDGVTIAKEIELEDHFENMGAKLVSEVASKTNDIAGDGTTTATVLTQAIVREGLKNVTAGANPVGIRRGIELAAETAVASIKEMAIPVHDKSAIAQVATVSSRSEKVGEYISDAMERVGSDGVITIEESKGMQTELDVVEGMQFDRGYLSQYMVSNTEKMVAELDNPYILITDKKISNIQEILPLLEQILKTNRPLLIVADDVDGEALPTLVLNKIKGVFNVVAVKAPGFGDRRKAQLEDLAILTGGTVITEELGLDLKDATLEALGQAAKATVDKDHTTIVEGAGSVGAISDRVAIIKAQIEKITSDFDREKLQERLAKLAGGVAVVKVGAATETELKAMKLLIEDALNATRAAVEEGIVSGGGTALVNAIAALDKLSEEGDIQTGINIVRRALEEPVRQIAANAGYEGSVIIDKLRSEKVGTGFNAATGQWVNMIEEGIVDPAKVTRSALQNAASVAGLILTTEAVVANKPEPAAPAMPPMDPSMGMGGMM</sequence>
<feature type="chain" id="PRO_0000063401" description="Chaperonin GroEL">
    <location>
        <begin position="1"/>
        <end position="542"/>
    </location>
</feature>
<feature type="binding site" evidence="1">
    <location>
        <begin position="29"/>
        <end position="32"/>
    </location>
    <ligand>
        <name>ATP</name>
        <dbReference type="ChEBI" id="CHEBI:30616"/>
    </ligand>
</feature>
<feature type="binding site" evidence="1">
    <location>
        <begin position="86"/>
        <end position="90"/>
    </location>
    <ligand>
        <name>ATP</name>
        <dbReference type="ChEBI" id="CHEBI:30616"/>
    </ligand>
</feature>
<feature type="binding site" evidence="1">
    <location>
        <position position="413"/>
    </location>
    <ligand>
        <name>ATP</name>
        <dbReference type="ChEBI" id="CHEBI:30616"/>
    </ligand>
</feature>
<feature type="binding site" evidence="1">
    <location>
        <begin position="476"/>
        <end position="478"/>
    </location>
    <ligand>
        <name>ATP</name>
        <dbReference type="ChEBI" id="CHEBI:30616"/>
    </ligand>
</feature>
<feature type="binding site" evidence="1">
    <location>
        <position position="492"/>
    </location>
    <ligand>
        <name>ATP</name>
        <dbReference type="ChEBI" id="CHEBI:30616"/>
    </ligand>
</feature>
<gene>
    <name evidence="1" type="primary">groEL</name>
    <name evidence="1" type="synonym">groL</name>
    <name type="ordered locus">llmg_0411</name>
</gene>
<dbReference type="EC" id="5.6.1.7" evidence="1"/>
<dbReference type="EMBL" id="AY029215">
    <property type="protein sequence ID" value="AAK31639.1"/>
    <property type="molecule type" value="Genomic_DNA"/>
</dbReference>
<dbReference type="EMBL" id="AM406671">
    <property type="protein sequence ID" value="CAL97015.1"/>
    <property type="molecule type" value="Genomic_DNA"/>
</dbReference>
<dbReference type="RefSeq" id="WP_011834460.1">
    <property type="nucleotide sequence ID" value="NC_009004.1"/>
</dbReference>
<dbReference type="SMR" id="Q9AEP7"/>
<dbReference type="STRING" id="416870.llmg_0411"/>
<dbReference type="KEGG" id="llm:llmg_0411"/>
<dbReference type="eggNOG" id="COG0459">
    <property type="taxonomic scope" value="Bacteria"/>
</dbReference>
<dbReference type="HOGENOM" id="CLU_016503_3_0_9"/>
<dbReference type="OrthoDB" id="9766614at2"/>
<dbReference type="PhylomeDB" id="Q9AEP7"/>
<dbReference type="Proteomes" id="UP000000364">
    <property type="component" value="Chromosome"/>
</dbReference>
<dbReference type="GO" id="GO:0005737">
    <property type="term" value="C:cytoplasm"/>
    <property type="evidence" value="ECO:0007669"/>
    <property type="project" value="UniProtKB-SubCell"/>
</dbReference>
<dbReference type="GO" id="GO:0005524">
    <property type="term" value="F:ATP binding"/>
    <property type="evidence" value="ECO:0007669"/>
    <property type="project" value="UniProtKB-UniRule"/>
</dbReference>
<dbReference type="GO" id="GO:0140662">
    <property type="term" value="F:ATP-dependent protein folding chaperone"/>
    <property type="evidence" value="ECO:0007669"/>
    <property type="project" value="InterPro"/>
</dbReference>
<dbReference type="GO" id="GO:0016853">
    <property type="term" value="F:isomerase activity"/>
    <property type="evidence" value="ECO:0007669"/>
    <property type="project" value="UniProtKB-KW"/>
</dbReference>
<dbReference type="GO" id="GO:0051082">
    <property type="term" value="F:unfolded protein binding"/>
    <property type="evidence" value="ECO:0007669"/>
    <property type="project" value="UniProtKB-UniRule"/>
</dbReference>
<dbReference type="GO" id="GO:0032757">
    <property type="term" value="P:positive regulation of interleukin-8 production"/>
    <property type="evidence" value="ECO:0000316"/>
    <property type="project" value="CAFA"/>
</dbReference>
<dbReference type="GO" id="GO:0042026">
    <property type="term" value="P:protein refolding"/>
    <property type="evidence" value="ECO:0007669"/>
    <property type="project" value="UniProtKB-UniRule"/>
</dbReference>
<dbReference type="CDD" id="cd03344">
    <property type="entry name" value="GroEL"/>
    <property type="match status" value="1"/>
</dbReference>
<dbReference type="FunFam" id="3.50.7.10:FF:000001">
    <property type="entry name" value="60 kDa chaperonin"/>
    <property type="match status" value="1"/>
</dbReference>
<dbReference type="Gene3D" id="3.50.7.10">
    <property type="entry name" value="GroEL"/>
    <property type="match status" value="1"/>
</dbReference>
<dbReference type="Gene3D" id="1.10.560.10">
    <property type="entry name" value="GroEL-like equatorial domain"/>
    <property type="match status" value="1"/>
</dbReference>
<dbReference type="Gene3D" id="3.30.260.10">
    <property type="entry name" value="TCP-1-like chaperonin intermediate domain"/>
    <property type="match status" value="1"/>
</dbReference>
<dbReference type="HAMAP" id="MF_00600">
    <property type="entry name" value="CH60"/>
    <property type="match status" value="1"/>
</dbReference>
<dbReference type="InterPro" id="IPR018370">
    <property type="entry name" value="Chaperonin_Cpn60_CS"/>
</dbReference>
<dbReference type="InterPro" id="IPR001844">
    <property type="entry name" value="Cpn60/GroEL"/>
</dbReference>
<dbReference type="InterPro" id="IPR002423">
    <property type="entry name" value="Cpn60/GroEL/TCP-1"/>
</dbReference>
<dbReference type="InterPro" id="IPR027409">
    <property type="entry name" value="GroEL-like_apical_dom_sf"/>
</dbReference>
<dbReference type="InterPro" id="IPR027413">
    <property type="entry name" value="GROEL-like_equatorial_sf"/>
</dbReference>
<dbReference type="InterPro" id="IPR027410">
    <property type="entry name" value="TCP-1-like_intermed_sf"/>
</dbReference>
<dbReference type="NCBIfam" id="TIGR02348">
    <property type="entry name" value="GroEL"/>
    <property type="match status" value="1"/>
</dbReference>
<dbReference type="NCBIfam" id="NF000592">
    <property type="entry name" value="PRK00013.1"/>
    <property type="match status" value="1"/>
</dbReference>
<dbReference type="NCBIfam" id="NF009487">
    <property type="entry name" value="PRK12849.1"/>
    <property type="match status" value="1"/>
</dbReference>
<dbReference type="NCBIfam" id="NF009488">
    <property type="entry name" value="PRK12850.1"/>
    <property type="match status" value="1"/>
</dbReference>
<dbReference type="NCBIfam" id="NF009489">
    <property type="entry name" value="PRK12851.1"/>
    <property type="match status" value="1"/>
</dbReference>
<dbReference type="PANTHER" id="PTHR45633">
    <property type="entry name" value="60 KDA HEAT SHOCK PROTEIN, MITOCHONDRIAL"/>
    <property type="match status" value="1"/>
</dbReference>
<dbReference type="Pfam" id="PF00118">
    <property type="entry name" value="Cpn60_TCP1"/>
    <property type="match status" value="1"/>
</dbReference>
<dbReference type="PRINTS" id="PR00298">
    <property type="entry name" value="CHAPERONIN60"/>
</dbReference>
<dbReference type="SUPFAM" id="SSF52029">
    <property type="entry name" value="GroEL apical domain-like"/>
    <property type="match status" value="1"/>
</dbReference>
<dbReference type="SUPFAM" id="SSF48592">
    <property type="entry name" value="GroEL equatorial domain-like"/>
    <property type="match status" value="1"/>
</dbReference>
<dbReference type="SUPFAM" id="SSF54849">
    <property type="entry name" value="GroEL-intermediate domain like"/>
    <property type="match status" value="1"/>
</dbReference>
<dbReference type="PROSITE" id="PS00296">
    <property type="entry name" value="CHAPERONINS_CPN60"/>
    <property type="match status" value="1"/>
</dbReference>
<name>CH60_LACLM</name>
<proteinExistence type="inferred from homology"/>
<organism>
    <name type="scientific">Lactococcus lactis subsp. cremoris (strain MG1363)</name>
    <dbReference type="NCBI Taxonomy" id="416870"/>
    <lineage>
        <taxon>Bacteria</taxon>
        <taxon>Bacillati</taxon>
        <taxon>Bacillota</taxon>
        <taxon>Bacilli</taxon>
        <taxon>Lactobacillales</taxon>
        <taxon>Streptococcaceae</taxon>
        <taxon>Lactococcus</taxon>
        <taxon>Lactococcus cremoris subsp. cremoris</taxon>
    </lineage>
</organism>
<keyword id="KW-0067">ATP-binding</keyword>
<keyword id="KW-0143">Chaperone</keyword>
<keyword id="KW-0963">Cytoplasm</keyword>
<keyword id="KW-0413">Isomerase</keyword>
<keyword id="KW-0547">Nucleotide-binding</keyword>
<accession>Q9AEP7</accession>
<accession>A2RIC0</accession>
<protein>
    <recommendedName>
        <fullName evidence="1">Chaperonin GroEL</fullName>
        <ecNumber evidence="1">5.6.1.7</ecNumber>
    </recommendedName>
    <alternativeName>
        <fullName evidence="1">60 kDa chaperonin</fullName>
    </alternativeName>
    <alternativeName>
        <fullName evidence="1">Chaperonin-60</fullName>
        <shortName evidence="1">Cpn60</shortName>
    </alternativeName>
</protein>
<evidence type="ECO:0000255" key="1">
    <source>
        <dbReference type="HAMAP-Rule" id="MF_00600"/>
    </source>
</evidence>
<reference key="1">
    <citation type="submission" date="2001-04" db="EMBL/GenBank/DDBJ databases">
        <title>groELS sequence from Lactococcus lactis subsp. cremoris MG1363.</title>
        <authorList>
            <person name="Vogensen F.K."/>
            <person name="Kilstrup M."/>
        </authorList>
    </citation>
    <scope>NUCLEOTIDE SEQUENCE [GENOMIC DNA]</scope>
</reference>
<reference key="2">
    <citation type="journal article" date="2007" name="J. Bacteriol.">
        <title>The complete genome sequence of the lactic acid bacterial paradigm Lactococcus lactis subsp. cremoris MG1363.</title>
        <authorList>
            <person name="Wegmann U."/>
            <person name="O'Connell-Motherway M."/>
            <person name="Zomer A."/>
            <person name="Buist G."/>
            <person name="Shearman C."/>
            <person name="Canchaya C."/>
            <person name="Ventura M."/>
            <person name="Goesmann A."/>
            <person name="Gasson M.J."/>
            <person name="Kuipers O.P."/>
            <person name="van Sinderen D."/>
            <person name="Kok J."/>
        </authorList>
    </citation>
    <scope>NUCLEOTIDE SEQUENCE [LARGE SCALE GENOMIC DNA]</scope>
    <source>
        <strain>MG1363</strain>
    </source>
</reference>
<comment type="function">
    <text evidence="1">Together with its co-chaperonin GroES, plays an essential role in assisting protein folding. The GroEL-GroES system forms a nano-cage that allows encapsulation of the non-native substrate proteins and provides a physical environment optimized to promote and accelerate protein folding.</text>
</comment>
<comment type="catalytic activity">
    <reaction evidence="1">
        <text>ATP + H2O + a folded polypeptide = ADP + phosphate + an unfolded polypeptide.</text>
        <dbReference type="EC" id="5.6.1.7"/>
    </reaction>
</comment>
<comment type="subunit">
    <text evidence="1">Forms a cylinder of 14 subunits composed of two heptameric rings stacked back-to-back. Interacts with the co-chaperonin GroES.</text>
</comment>
<comment type="subcellular location">
    <subcellularLocation>
        <location evidence="1">Cytoplasm</location>
    </subcellularLocation>
</comment>
<comment type="similarity">
    <text evidence="1">Belongs to the chaperonin (HSP60) family.</text>
</comment>